<accession>P69396</accession>
<accession>P25410</accession>
<dbReference type="EMBL" id="X62118">
    <property type="protein sequence ID" value="CAA44035.1"/>
    <property type="molecule type" value="Genomic_DNA"/>
</dbReference>
<dbReference type="PIR" id="S21985">
    <property type="entry name" value="S21985"/>
</dbReference>
<dbReference type="SMR" id="P69396"/>
<dbReference type="GO" id="GO:0009535">
    <property type="term" value="C:chloroplast thylakoid membrane"/>
    <property type="evidence" value="ECO:0007669"/>
    <property type="project" value="UniProtKB-SubCell"/>
</dbReference>
<dbReference type="GO" id="GO:0009522">
    <property type="term" value="C:photosystem I"/>
    <property type="evidence" value="ECO:0007669"/>
    <property type="project" value="UniProtKB-KW"/>
</dbReference>
<dbReference type="GO" id="GO:0015979">
    <property type="term" value="P:photosynthesis"/>
    <property type="evidence" value="ECO:0007669"/>
    <property type="project" value="UniProtKB-UniRule"/>
</dbReference>
<dbReference type="HAMAP" id="MF_00431">
    <property type="entry name" value="PSI_PsaI"/>
    <property type="match status" value="1"/>
</dbReference>
<dbReference type="InterPro" id="IPR001302">
    <property type="entry name" value="PSI_PsaI"/>
</dbReference>
<dbReference type="InterPro" id="IPR036357">
    <property type="entry name" value="PSI_PsaI_sf"/>
</dbReference>
<dbReference type="NCBIfam" id="TIGR03052">
    <property type="entry name" value="PS_I_psaI"/>
    <property type="match status" value="1"/>
</dbReference>
<dbReference type="PANTHER" id="PTHR35775">
    <property type="match status" value="1"/>
</dbReference>
<dbReference type="PANTHER" id="PTHR35775:SF2">
    <property type="entry name" value="PHOTOSYSTEM I REACTION CENTER SUBUNIT VIII"/>
    <property type="match status" value="1"/>
</dbReference>
<dbReference type="Pfam" id="PF00796">
    <property type="entry name" value="PSI_8"/>
    <property type="match status" value="1"/>
</dbReference>
<dbReference type="SUPFAM" id="SSF81540">
    <property type="entry name" value="Subunit VIII of photosystem I reaction centre, PsaI"/>
    <property type="match status" value="1"/>
</dbReference>
<reference key="1">
    <citation type="journal article" date="1991" name="Genetics">
        <title>Molecular analysis of the hot spot region related to length mutations in wheat chloroplast DNAs. I. Nucleotide divergence of genes and intergenic spacer regions located in the hot spot region.</title>
        <authorList>
            <person name="Ogihara Y."/>
            <person name="Terachi T."/>
            <person name="Sasakuma T."/>
        </authorList>
    </citation>
    <scope>NUCLEOTIDE SEQUENCE [GENOMIC DNA]</scope>
    <source>
        <tissue>Seedling</tissue>
    </source>
</reference>
<gene>
    <name type="primary">psaI</name>
</gene>
<keyword id="KW-0150">Chloroplast</keyword>
<keyword id="KW-0472">Membrane</keyword>
<keyword id="KW-0602">Photosynthesis</keyword>
<keyword id="KW-0603">Photosystem I</keyword>
<keyword id="KW-0934">Plastid</keyword>
<keyword id="KW-0793">Thylakoid</keyword>
<keyword id="KW-0812">Transmembrane</keyword>
<keyword id="KW-1133">Transmembrane helix</keyword>
<name>PSAI_AEGCR</name>
<sequence>MTDLNLPSIFVPLVGLVFPAIAMTSLFLYVQKNKIV</sequence>
<comment type="function">
    <text evidence="1">May help in the organization of the PsaL subunit.</text>
</comment>
<comment type="subcellular location">
    <subcellularLocation>
        <location evidence="1">Plastid</location>
        <location evidence="1">Chloroplast thylakoid membrane</location>
        <topology evidence="1">Single-pass membrane protein</topology>
    </subcellularLocation>
</comment>
<comment type="similarity">
    <text evidence="3">Belongs to the PsaI family.</text>
</comment>
<evidence type="ECO:0000250" key="1"/>
<evidence type="ECO:0000255" key="2"/>
<evidence type="ECO:0000305" key="3"/>
<geneLocation type="chloroplast"/>
<protein>
    <recommendedName>
        <fullName>Photosystem I reaction center subunit VIII</fullName>
        <shortName>PSI-I</shortName>
    </recommendedName>
</protein>
<feature type="chain" id="PRO_0000194637" description="Photosystem I reaction center subunit VIII">
    <location>
        <begin position="1"/>
        <end position="36"/>
    </location>
</feature>
<feature type="transmembrane region" description="Helical" evidence="2">
    <location>
        <begin position="10"/>
        <end position="30"/>
    </location>
</feature>
<proteinExistence type="inferred from homology"/>
<organism>
    <name type="scientific">Aegilops crassa</name>
    <name type="common">Persian goatgrass</name>
    <name type="synonym">Triticum crassum</name>
    <dbReference type="NCBI Taxonomy" id="4481"/>
    <lineage>
        <taxon>Eukaryota</taxon>
        <taxon>Viridiplantae</taxon>
        <taxon>Streptophyta</taxon>
        <taxon>Embryophyta</taxon>
        <taxon>Tracheophyta</taxon>
        <taxon>Spermatophyta</taxon>
        <taxon>Magnoliopsida</taxon>
        <taxon>Liliopsida</taxon>
        <taxon>Poales</taxon>
        <taxon>Poaceae</taxon>
        <taxon>BOP clade</taxon>
        <taxon>Pooideae</taxon>
        <taxon>Triticodae</taxon>
        <taxon>Triticeae</taxon>
        <taxon>Triticinae</taxon>
        <taxon>Aegilops</taxon>
    </lineage>
</organism>